<feature type="chain" id="PRO_0000143798" description="Maturase K">
    <location>
        <begin position="1"/>
        <end position="515"/>
    </location>
</feature>
<gene>
    <name evidence="1" type="primary">matK</name>
</gene>
<protein>
    <recommendedName>
        <fullName evidence="1">Maturase K</fullName>
    </recommendedName>
    <alternativeName>
        <fullName evidence="1">Intron maturase</fullName>
    </alternativeName>
</protein>
<organism>
    <name type="scientific">Zingiber officinale</name>
    <name type="common">Ginger</name>
    <name type="synonym">Amomum zingiber</name>
    <dbReference type="NCBI Taxonomy" id="94328"/>
    <lineage>
        <taxon>Eukaryota</taxon>
        <taxon>Viridiplantae</taxon>
        <taxon>Streptophyta</taxon>
        <taxon>Embryophyta</taxon>
        <taxon>Tracheophyta</taxon>
        <taxon>Spermatophyta</taxon>
        <taxon>Magnoliopsida</taxon>
        <taxon>Liliopsida</taxon>
        <taxon>Zingiberales</taxon>
        <taxon>Zingiberaceae</taxon>
        <taxon>Zingiber</taxon>
    </lineage>
</organism>
<sequence length="515" mass="62113">MEELQGYLEEDRSRQQQFLYPLLFQEYIYVFAYDHGLNSSIFYEPQNSLGYDNKFSSVLVKRLIIRMYQKNYLIYSVNDIYQNIFVGHNNYFYFNFFSQILSEGFAVIVEIPFSLQLISSLEEKEIPKSHNLQSSHSIFPFLEDKLLHLNYLSDILIPYPVHMEILVQILQSWIQDVLSLHLLQFLLHEYYNWNSLIIPKKSIYVFSKENKRLFWFLYNLYIYEYEFLLVFPCKQSSFLRLISSGVLLERIHFYVKIEHLGVYRIFCQKTLWIFKDPFIHYIRYQGKSILGSRGTHFLMKKWKYHLVNFWQYYFHFWSQPYRIDIKKLSNYSFYFLGYFSSVQINSSMVRNQMLENSFLMDTLTKKFDTIIPIIPLIRSLFKAQFCTVSGYPISKPIWTDLADCDIINRFGRICRKLTHYHSGSSKKQSLYRMKYILRLSCARTLARKHKSSARSFLQRLSSGLLEEFFTEEEQVIFLIFPKIISFYLYGSYRERIWYLDIIRINDLVNCLLVTT</sequence>
<comment type="function">
    <text evidence="1">Usually encoded in the trnK tRNA gene intron. Probably assists in splicing its own and other chloroplast group II introns.</text>
</comment>
<comment type="subcellular location">
    <subcellularLocation>
        <location>Plastid</location>
        <location>Chloroplast</location>
    </subcellularLocation>
</comment>
<comment type="similarity">
    <text evidence="1">Belongs to the intron maturase 2 family. MatK subfamily.</text>
</comment>
<name>MATK_ZINOF</name>
<evidence type="ECO:0000255" key="1">
    <source>
        <dbReference type="HAMAP-Rule" id="MF_01390"/>
    </source>
</evidence>
<keyword id="KW-0150">Chloroplast</keyword>
<keyword id="KW-0507">mRNA processing</keyword>
<keyword id="KW-0934">Plastid</keyword>
<keyword id="KW-0694">RNA-binding</keyword>
<keyword id="KW-0819">tRNA processing</keyword>
<dbReference type="EMBL" id="AB047756">
    <property type="protein sequence ID" value="BAD12072.1"/>
    <property type="molecule type" value="Genomic_DNA"/>
</dbReference>
<dbReference type="GO" id="GO:0009507">
    <property type="term" value="C:chloroplast"/>
    <property type="evidence" value="ECO:0007669"/>
    <property type="project" value="UniProtKB-SubCell"/>
</dbReference>
<dbReference type="GO" id="GO:0003723">
    <property type="term" value="F:RNA binding"/>
    <property type="evidence" value="ECO:0007669"/>
    <property type="project" value="UniProtKB-KW"/>
</dbReference>
<dbReference type="GO" id="GO:0006397">
    <property type="term" value="P:mRNA processing"/>
    <property type="evidence" value="ECO:0007669"/>
    <property type="project" value="UniProtKB-KW"/>
</dbReference>
<dbReference type="GO" id="GO:0008380">
    <property type="term" value="P:RNA splicing"/>
    <property type="evidence" value="ECO:0007669"/>
    <property type="project" value="UniProtKB-UniRule"/>
</dbReference>
<dbReference type="GO" id="GO:0008033">
    <property type="term" value="P:tRNA processing"/>
    <property type="evidence" value="ECO:0007669"/>
    <property type="project" value="UniProtKB-KW"/>
</dbReference>
<dbReference type="HAMAP" id="MF_01390">
    <property type="entry name" value="MatK"/>
    <property type="match status" value="1"/>
</dbReference>
<dbReference type="InterPro" id="IPR024937">
    <property type="entry name" value="Domain_X"/>
</dbReference>
<dbReference type="InterPro" id="IPR002866">
    <property type="entry name" value="Maturase_MatK"/>
</dbReference>
<dbReference type="InterPro" id="IPR024942">
    <property type="entry name" value="Maturase_MatK_N"/>
</dbReference>
<dbReference type="PANTHER" id="PTHR34811">
    <property type="entry name" value="MATURASE K"/>
    <property type="match status" value="1"/>
</dbReference>
<dbReference type="PANTHER" id="PTHR34811:SF1">
    <property type="entry name" value="MATURASE K"/>
    <property type="match status" value="1"/>
</dbReference>
<dbReference type="Pfam" id="PF01348">
    <property type="entry name" value="Intron_maturas2"/>
    <property type="match status" value="1"/>
</dbReference>
<dbReference type="Pfam" id="PF01824">
    <property type="entry name" value="MatK_N"/>
    <property type="match status" value="1"/>
</dbReference>
<geneLocation type="chloroplast"/>
<reference key="1">
    <citation type="submission" date="2000-08" db="EMBL/GenBank/DDBJ databases">
        <title>Phylogenetic relationships of East Asia Curcuma (Zingiberaceae): inferences based on plastid trnK gene sequence data.</title>
        <authorList>
            <person name="Cao H."/>
            <person name="Sasaki Y."/>
            <person name="Fushimi H."/>
            <person name="Komatsu K."/>
        </authorList>
    </citation>
    <scope>NUCLEOTIDE SEQUENCE [GENOMIC DNA]</scope>
</reference>
<proteinExistence type="inferred from homology"/>
<accession>Q76MH8</accession>